<keyword id="KW-0963">Cytoplasm</keyword>
<keyword id="KW-0275">Fatty acid biosynthesis</keyword>
<keyword id="KW-0276">Fatty acid metabolism</keyword>
<keyword id="KW-0444">Lipid biosynthesis</keyword>
<keyword id="KW-0443">Lipid metabolism</keyword>
<keyword id="KW-0460">Magnesium</keyword>
<keyword id="KW-0479">Metal-binding</keyword>
<keyword id="KW-0808">Transferase</keyword>
<evidence type="ECO:0000255" key="1">
    <source>
        <dbReference type="HAMAP-Rule" id="MF_00101"/>
    </source>
</evidence>
<protein>
    <recommendedName>
        <fullName evidence="1">Holo-[acyl-carrier-protein] synthase</fullName>
        <shortName evidence="1">Holo-ACP synthase</shortName>
        <ecNumber evidence="1">2.7.8.7</ecNumber>
    </recommendedName>
    <alternativeName>
        <fullName evidence="1">4'-phosphopantetheinyl transferase AcpS</fullName>
    </alternativeName>
</protein>
<reference key="1">
    <citation type="journal article" date="2004" name="Proc. Natl. Acad. Sci. U.S.A.">
        <title>Complete genomes of two clinical Staphylococcus aureus strains: evidence for the rapid evolution of virulence and drug resistance.</title>
        <authorList>
            <person name="Holden M.T.G."/>
            <person name="Feil E.J."/>
            <person name="Lindsay J.A."/>
            <person name="Peacock S.J."/>
            <person name="Day N.P.J."/>
            <person name="Enright M.C."/>
            <person name="Foster T.J."/>
            <person name="Moore C.E."/>
            <person name="Hurst L."/>
            <person name="Atkin R."/>
            <person name="Barron A."/>
            <person name="Bason N."/>
            <person name="Bentley S.D."/>
            <person name="Chillingworth C."/>
            <person name="Chillingworth T."/>
            <person name="Churcher C."/>
            <person name="Clark L."/>
            <person name="Corton C."/>
            <person name="Cronin A."/>
            <person name="Doggett J."/>
            <person name="Dowd L."/>
            <person name="Feltwell T."/>
            <person name="Hance Z."/>
            <person name="Harris B."/>
            <person name="Hauser H."/>
            <person name="Holroyd S."/>
            <person name="Jagels K."/>
            <person name="James K.D."/>
            <person name="Lennard N."/>
            <person name="Line A."/>
            <person name="Mayes R."/>
            <person name="Moule S."/>
            <person name="Mungall K."/>
            <person name="Ormond D."/>
            <person name="Quail M.A."/>
            <person name="Rabbinowitsch E."/>
            <person name="Rutherford K.M."/>
            <person name="Sanders M."/>
            <person name="Sharp S."/>
            <person name="Simmonds M."/>
            <person name="Stevens K."/>
            <person name="Whitehead S."/>
            <person name="Barrell B.G."/>
            <person name="Spratt B.G."/>
            <person name="Parkhill J."/>
        </authorList>
    </citation>
    <scope>NUCLEOTIDE SEQUENCE [LARGE SCALE GENOMIC DNA]</scope>
    <source>
        <strain>MSSA476</strain>
    </source>
</reference>
<comment type="function">
    <text evidence="1">Transfers the 4'-phosphopantetheine moiety from coenzyme A to a Ser of acyl-carrier-protein.</text>
</comment>
<comment type="catalytic activity">
    <reaction evidence="1">
        <text>apo-[ACP] + CoA = holo-[ACP] + adenosine 3',5'-bisphosphate + H(+)</text>
        <dbReference type="Rhea" id="RHEA:12068"/>
        <dbReference type="Rhea" id="RHEA-COMP:9685"/>
        <dbReference type="Rhea" id="RHEA-COMP:9690"/>
        <dbReference type="ChEBI" id="CHEBI:15378"/>
        <dbReference type="ChEBI" id="CHEBI:29999"/>
        <dbReference type="ChEBI" id="CHEBI:57287"/>
        <dbReference type="ChEBI" id="CHEBI:58343"/>
        <dbReference type="ChEBI" id="CHEBI:64479"/>
        <dbReference type="EC" id="2.7.8.7"/>
    </reaction>
</comment>
<comment type="cofactor">
    <cofactor evidence="1">
        <name>Mg(2+)</name>
        <dbReference type="ChEBI" id="CHEBI:18420"/>
    </cofactor>
</comment>
<comment type="subcellular location">
    <subcellularLocation>
        <location evidence="1">Cytoplasm</location>
    </subcellularLocation>
</comment>
<comment type="similarity">
    <text evidence="1">Belongs to the P-Pant transferase superfamily. AcpS family.</text>
</comment>
<organism>
    <name type="scientific">Staphylococcus aureus (strain MSSA476)</name>
    <dbReference type="NCBI Taxonomy" id="282459"/>
    <lineage>
        <taxon>Bacteria</taxon>
        <taxon>Bacillati</taxon>
        <taxon>Bacillota</taxon>
        <taxon>Bacilli</taxon>
        <taxon>Bacillales</taxon>
        <taxon>Staphylococcaceae</taxon>
        <taxon>Staphylococcus</taxon>
    </lineage>
</organism>
<accession>Q6G7N8</accession>
<name>ACPS_STAAS</name>
<feature type="chain" id="PRO_0000175704" description="Holo-[acyl-carrier-protein] synthase">
    <location>
        <begin position="1"/>
        <end position="119"/>
    </location>
</feature>
<feature type="binding site" evidence="1">
    <location>
        <position position="8"/>
    </location>
    <ligand>
        <name>Mg(2+)</name>
        <dbReference type="ChEBI" id="CHEBI:18420"/>
    </ligand>
</feature>
<feature type="binding site" evidence="1">
    <location>
        <position position="59"/>
    </location>
    <ligand>
        <name>Mg(2+)</name>
        <dbReference type="ChEBI" id="CHEBI:18420"/>
    </ligand>
</feature>
<sequence length="119" mass="13634">MIHGIGVDLIEIDRIKVLYSKQPKLVERILTKNEQHKFNNFTHEQRKIEFLAGRFATKEAFSKALGTGLGKHVAFNDIDCYNDELGKPKIDYEGFIVHVSISHTEHYAMSQVVLEKSAF</sequence>
<proteinExistence type="inferred from homology"/>
<gene>
    <name evidence="1" type="primary">acpS</name>
    <name type="synonym">dpj</name>
    <name type="ordered locus">SAS1976</name>
</gene>
<dbReference type="EC" id="2.7.8.7" evidence="1"/>
<dbReference type="EMBL" id="BX571857">
    <property type="protein sequence ID" value="CAG43783.1"/>
    <property type="molecule type" value="Genomic_DNA"/>
</dbReference>
<dbReference type="RefSeq" id="WP_000581197.1">
    <property type="nucleotide sequence ID" value="NC_002953.3"/>
</dbReference>
<dbReference type="SMR" id="Q6G7N8"/>
<dbReference type="KEGG" id="sas:SAS1976"/>
<dbReference type="HOGENOM" id="CLU_089696_1_2_9"/>
<dbReference type="GO" id="GO:0005737">
    <property type="term" value="C:cytoplasm"/>
    <property type="evidence" value="ECO:0007669"/>
    <property type="project" value="UniProtKB-SubCell"/>
</dbReference>
<dbReference type="GO" id="GO:0008897">
    <property type="term" value="F:holo-[acyl-carrier-protein] synthase activity"/>
    <property type="evidence" value="ECO:0007669"/>
    <property type="project" value="UniProtKB-UniRule"/>
</dbReference>
<dbReference type="GO" id="GO:0000287">
    <property type="term" value="F:magnesium ion binding"/>
    <property type="evidence" value="ECO:0007669"/>
    <property type="project" value="UniProtKB-UniRule"/>
</dbReference>
<dbReference type="GO" id="GO:0006633">
    <property type="term" value="P:fatty acid biosynthetic process"/>
    <property type="evidence" value="ECO:0007669"/>
    <property type="project" value="UniProtKB-UniRule"/>
</dbReference>
<dbReference type="Gene3D" id="3.90.470.20">
    <property type="entry name" value="4'-phosphopantetheinyl transferase domain"/>
    <property type="match status" value="1"/>
</dbReference>
<dbReference type="HAMAP" id="MF_00101">
    <property type="entry name" value="AcpS"/>
    <property type="match status" value="1"/>
</dbReference>
<dbReference type="InterPro" id="IPR008278">
    <property type="entry name" value="4-PPantetheinyl_Trfase_dom"/>
</dbReference>
<dbReference type="InterPro" id="IPR037143">
    <property type="entry name" value="4-PPantetheinyl_Trfase_dom_sf"/>
</dbReference>
<dbReference type="InterPro" id="IPR002582">
    <property type="entry name" value="ACPS"/>
</dbReference>
<dbReference type="InterPro" id="IPR004568">
    <property type="entry name" value="Ppantetheine-prot_Trfase_dom"/>
</dbReference>
<dbReference type="NCBIfam" id="TIGR00516">
    <property type="entry name" value="acpS"/>
    <property type="match status" value="1"/>
</dbReference>
<dbReference type="NCBIfam" id="TIGR00556">
    <property type="entry name" value="pantethn_trn"/>
    <property type="match status" value="1"/>
</dbReference>
<dbReference type="Pfam" id="PF01648">
    <property type="entry name" value="ACPS"/>
    <property type="match status" value="1"/>
</dbReference>
<dbReference type="SUPFAM" id="SSF56214">
    <property type="entry name" value="4'-phosphopantetheinyl transferase"/>
    <property type="match status" value="1"/>
</dbReference>